<name>GATA_TREPA</name>
<sequence length="506" mass="54102">MDAHAITCASWNMLKAQLEAGAISSLQIVRAFRNVYEEDTRSASPLGALVEFFSDAEEHARTADNLRASCAQSTKTAGANGGSVSGKPLLGLPFAVKDNISVKGKHCTCGSKLLADYRAPYDATVVARLRAAGAIPLGRTNMDEFAMGSSTEYSVYGPTRNPRDRSRTSGGSSGGSAAAVAGGQAPFALGTETGGSVRLPAAYCGLYGLKPTYGLLSRYGVVAFGSSLDQIGFFATCIDDIALALSVTSGKDLYDSTSTCPPPATGRHAVSHHLAPFSAHECSILRAAVPRELVDAPGVHPDVSAQFQRFLTWLRAQNVQVEEVTLPALQAAVPVYYLVATAEAASNLARFDGIRYGQRGDTDALLENYYRAVRTSGFGPEVQRRIIVGNYVLSRHFSGDYYRTSVRVRSRIEQECTQLLCSYHFIVCPTAATGAFPLGERIHDPLAMYCSDLFTTFVNLARLPALSVPVGTSGTGLPIGIQIIGSQWQECAVLRLAKRWEEAPHV</sequence>
<comment type="function">
    <text evidence="1">Allows the formation of correctly charged Gln-tRNA(Gln) through the transamidation of misacylated Glu-tRNA(Gln) in organisms which lack glutaminyl-tRNA synthetase. The reaction takes place in the presence of glutamine and ATP through an activated gamma-phospho-Glu-tRNA(Gln) (By similarity).</text>
</comment>
<comment type="catalytic activity">
    <reaction>
        <text>L-glutamyl-tRNA(Gln) + L-glutamine + ATP + H2O = L-glutaminyl-tRNA(Gln) + L-glutamate + ADP + phosphate + H(+)</text>
        <dbReference type="Rhea" id="RHEA:17521"/>
        <dbReference type="Rhea" id="RHEA-COMP:9681"/>
        <dbReference type="Rhea" id="RHEA-COMP:9684"/>
        <dbReference type="ChEBI" id="CHEBI:15377"/>
        <dbReference type="ChEBI" id="CHEBI:15378"/>
        <dbReference type="ChEBI" id="CHEBI:29985"/>
        <dbReference type="ChEBI" id="CHEBI:30616"/>
        <dbReference type="ChEBI" id="CHEBI:43474"/>
        <dbReference type="ChEBI" id="CHEBI:58359"/>
        <dbReference type="ChEBI" id="CHEBI:78520"/>
        <dbReference type="ChEBI" id="CHEBI:78521"/>
        <dbReference type="ChEBI" id="CHEBI:456216"/>
        <dbReference type="EC" id="6.3.5.7"/>
    </reaction>
</comment>
<comment type="subunit">
    <text evidence="1">Heterotrimer of A, B and C subunits.</text>
</comment>
<comment type="similarity">
    <text evidence="3">Belongs to the amidase family. GatA subfamily.</text>
</comment>
<dbReference type="EC" id="6.3.5.7"/>
<dbReference type="EMBL" id="AE000520">
    <property type="protein sequence ID" value="AAC65970.1"/>
    <property type="molecule type" value="Genomic_DNA"/>
</dbReference>
<dbReference type="PIR" id="H71253">
    <property type="entry name" value="H71253"/>
</dbReference>
<dbReference type="RefSeq" id="WP_010882464.1">
    <property type="nucleotide sequence ID" value="NC_021490.2"/>
</dbReference>
<dbReference type="SMR" id="O83983"/>
<dbReference type="IntAct" id="O83983">
    <property type="interactions" value="3"/>
</dbReference>
<dbReference type="STRING" id="243276.TP_1020"/>
<dbReference type="EnsemblBacteria" id="AAC65970">
    <property type="protein sequence ID" value="AAC65970"/>
    <property type="gene ID" value="TP_1020"/>
</dbReference>
<dbReference type="GeneID" id="93876767"/>
<dbReference type="KEGG" id="tpa:TP_1020"/>
<dbReference type="KEGG" id="tpw:TPANIC_1020"/>
<dbReference type="eggNOG" id="COG0154">
    <property type="taxonomic scope" value="Bacteria"/>
</dbReference>
<dbReference type="HOGENOM" id="CLU_009600_0_3_12"/>
<dbReference type="OrthoDB" id="9811471at2"/>
<dbReference type="Proteomes" id="UP000000811">
    <property type="component" value="Chromosome"/>
</dbReference>
<dbReference type="GO" id="GO:0030956">
    <property type="term" value="C:glutamyl-tRNA(Gln) amidotransferase complex"/>
    <property type="evidence" value="ECO:0007669"/>
    <property type="project" value="InterPro"/>
</dbReference>
<dbReference type="GO" id="GO:0005524">
    <property type="term" value="F:ATP binding"/>
    <property type="evidence" value="ECO:0007669"/>
    <property type="project" value="UniProtKB-KW"/>
</dbReference>
<dbReference type="GO" id="GO:0050567">
    <property type="term" value="F:glutaminyl-tRNA synthase (glutamine-hydrolyzing) activity"/>
    <property type="evidence" value="ECO:0007669"/>
    <property type="project" value="UniProtKB-UniRule"/>
</dbReference>
<dbReference type="GO" id="GO:0006412">
    <property type="term" value="P:translation"/>
    <property type="evidence" value="ECO:0007669"/>
    <property type="project" value="UniProtKB-UniRule"/>
</dbReference>
<dbReference type="Gene3D" id="3.90.1300.10">
    <property type="entry name" value="Amidase signature (AS) domain"/>
    <property type="match status" value="1"/>
</dbReference>
<dbReference type="HAMAP" id="MF_00120">
    <property type="entry name" value="GatA"/>
    <property type="match status" value="1"/>
</dbReference>
<dbReference type="InterPro" id="IPR000120">
    <property type="entry name" value="Amidase"/>
</dbReference>
<dbReference type="InterPro" id="IPR020556">
    <property type="entry name" value="Amidase_CS"/>
</dbReference>
<dbReference type="InterPro" id="IPR023631">
    <property type="entry name" value="Amidase_dom"/>
</dbReference>
<dbReference type="InterPro" id="IPR036928">
    <property type="entry name" value="AS_sf"/>
</dbReference>
<dbReference type="InterPro" id="IPR004412">
    <property type="entry name" value="GatA"/>
</dbReference>
<dbReference type="NCBIfam" id="TIGR00132">
    <property type="entry name" value="gatA"/>
    <property type="match status" value="1"/>
</dbReference>
<dbReference type="PANTHER" id="PTHR11895:SF151">
    <property type="entry name" value="GLUTAMYL-TRNA(GLN) AMIDOTRANSFERASE SUBUNIT A"/>
    <property type="match status" value="1"/>
</dbReference>
<dbReference type="PANTHER" id="PTHR11895">
    <property type="entry name" value="TRANSAMIDASE"/>
    <property type="match status" value="1"/>
</dbReference>
<dbReference type="Pfam" id="PF01425">
    <property type="entry name" value="Amidase"/>
    <property type="match status" value="1"/>
</dbReference>
<dbReference type="SUPFAM" id="SSF75304">
    <property type="entry name" value="Amidase signature (AS) enzymes"/>
    <property type="match status" value="1"/>
</dbReference>
<dbReference type="PROSITE" id="PS00571">
    <property type="entry name" value="AMIDASES"/>
    <property type="match status" value="1"/>
</dbReference>
<organism>
    <name type="scientific">Treponema pallidum (strain Nichols)</name>
    <dbReference type="NCBI Taxonomy" id="243276"/>
    <lineage>
        <taxon>Bacteria</taxon>
        <taxon>Pseudomonadati</taxon>
        <taxon>Spirochaetota</taxon>
        <taxon>Spirochaetia</taxon>
        <taxon>Spirochaetales</taxon>
        <taxon>Treponemataceae</taxon>
        <taxon>Treponema</taxon>
    </lineage>
</organism>
<accession>O83983</accession>
<proteinExistence type="inferred from homology"/>
<feature type="chain" id="PRO_0000105224" description="Glutamyl-tRNA(Gln) amidotransferase subunit A">
    <location>
        <begin position="1"/>
        <end position="506"/>
    </location>
</feature>
<feature type="region of interest" description="Disordered" evidence="2">
    <location>
        <begin position="153"/>
        <end position="177"/>
    </location>
</feature>
<feature type="active site" description="Charge relay system" evidence="1">
    <location>
        <position position="97"/>
    </location>
</feature>
<feature type="active site" description="Charge relay system" evidence="1">
    <location>
        <position position="172"/>
    </location>
</feature>
<feature type="active site" description="Acyl-ester intermediate" evidence="1">
    <location>
        <position position="196"/>
    </location>
</feature>
<gene>
    <name type="primary">gatA</name>
    <name type="ordered locus">TP_1020</name>
</gene>
<evidence type="ECO:0000250" key="1"/>
<evidence type="ECO:0000256" key="2">
    <source>
        <dbReference type="SAM" id="MobiDB-lite"/>
    </source>
</evidence>
<evidence type="ECO:0000305" key="3"/>
<keyword id="KW-0067">ATP-binding</keyword>
<keyword id="KW-0436">Ligase</keyword>
<keyword id="KW-0547">Nucleotide-binding</keyword>
<keyword id="KW-0648">Protein biosynthesis</keyword>
<keyword id="KW-1185">Reference proteome</keyword>
<protein>
    <recommendedName>
        <fullName>Glutamyl-tRNA(Gln) amidotransferase subunit A</fullName>
        <shortName>Glu-ADT subunit A</shortName>
        <ecNumber>6.3.5.7</ecNumber>
    </recommendedName>
</protein>
<reference key="1">
    <citation type="journal article" date="1998" name="Science">
        <title>Complete genome sequence of Treponema pallidum, the syphilis spirochete.</title>
        <authorList>
            <person name="Fraser C.M."/>
            <person name="Norris S.J."/>
            <person name="Weinstock G.M."/>
            <person name="White O."/>
            <person name="Sutton G.G."/>
            <person name="Dodson R.J."/>
            <person name="Gwinn M.L."/>
            <person name="Hickey E.K."/>
            <person name="Clayton R.A."/>
            <person name="Ketchum K.A."/>
            <person name="Sodergren E."/>
            <person name="Hardham J.M."/>
            <person name="McLeod M.P."/>
            <person name="Salzberg S.L."/>
            <person name="Peterson J.D."/>
            <person name="Khalak H.G."/>
            <person name="Richardson D.L."/>
            <person name="Howell J.K."/>
            <person name="Chidambaram M."/>
            <person name="Utterback T.R."/>
            <person name="McDonald L.A."/>
            <person name="Artiach P."/>
            <person name="Bowman C."/>
            <person name="Cotton M.D."/>
            <person name="Fujii C."/>
            <person name="Garland S.A."/>
            <person name="Hatch B."/>
            <person name="Horst K."/>
            <person name="Roberts K.M."/>
            <person name="Sandusky M."/>
            <person name="Weidman J.F."/>
            <person name="Smith H.O."/>
            <person name="Venter J.C."/>
        </authorList>
    </citation>
    <scope>NUCLEOTIDE SEQUENCE [LARGE SCALE GENOMIC DNA]</scope>
    <source>
        <strain>Nichols</strain>
    </source>
</reference>